<organism>
    <name type="scientific">Mus musculus</name>
    <name type="common">Mouse</name>
    <dbReference type="NCBI Taxonomy" id="10090"/>
    <lineage>
        <taxon>Eukaryota</taxon>
        <taxon>Metazoa</taxon>
        <taxon>Chordata</taxon>
        <taxon>Craniata</taxon>
        <taxon>Vertebrata</taxon>
        <taxon>Euteleostomi</taxon>
        <taxon>Mammalia</taxon>
        <taxon>Eutheria</taxon>
        <taxon>Euarchontoglires</taxon>
        <taxon>Glires</taxon>
        <taxon>Rodentia</taxon>
        <taxon>Myomorpha</taxon>
        <taxon>Muroidea</taxon>
        <taxon>Muridae</taxon>
        <taxon>Murinae</taxon>
        <taxon>Mus</taxon>
        <taxon>Mus</taxon>
    </lineage>
</organism>
<dbReference type="EMBL" id="AK122286">
    <property type="protein sequence ID" value="BAC65568.1"/>
    <property type="status" value="ALT_INIT"/>
    <property type="molecule type" value="mRNA"/>
</dbReference>
<dbReference type="EMBL" id="AC130541">
    <property type="status" value="NOT_ANNOTATED_CDS"/>
    <property type="molecule type" value="Genomic_DNA"/>
</dbReference>
<dbReference type="EMBL" id="AC153661">
    <property type="status" value="NOT_ANNOTATED_CDS"/>
    <property type="molecule type" value="Genomic_DNA"/>
</dbReference>
<dbReference type="EMBL" id="BC025653">
    <property type="protein sequence ID" value="AAH25653.1"/>
    <property type="status" value="ALT_SEQ"/>
    <property type="molecule type" value="mRNA"/>
</dbReference>
<dbReference type="EMBL" id="BC034266">
    <property type="protein sequence ID" value="AAH34266.1"/>
    <property type="molecule type" value="mRNA"/>
</dbReference>
<dbReference type="EMBL" id="BC050783">
    <property type="protein sequence ID" value="AAH50783.1"/>
    <property type="molecule type" value="mRNA"/>
</dbReference>
<dbReference type="EMBL" id="BC141172">
    <property type="protein sequence ID" value="AAI41173.1"/>
    <property type="molecule type" value="mRNA"/>
</dbReference>
<dbReference type="CCDS" id="CCDS38562.1">
    <molecule id="Q80YT7-2"/>
</dbReference>
<dbReference type="RefSeq" id="NP_001034465.2">
    <property type="nucleotide sequence ID" value="NM_001039376.2"/>
</dbReference>
<dbReference type="RefSeq" id="NP_835181.2">
    <molecule id="Q80YT7-2"/>
    <property type="nucleotide sequence ID" value="NM_178080.4"/>
</dbReference>
<dbReference type="SMR" id="Q80YT7"/>
<dbReference type="BioGRID" id="219963">
    <property type="interactions" value="189"/>
</dbReference>
<dbReference type="FunCoup" id="Q80YT7">
    <property type="interactions" value="540"/>
</dbReference>
<dbReference type="IntAct" id="Q80YT7">
    <property type="interactions" value="179"/>
</dbReference>
<dbReference type="MINT" id="Q80YT7"/>
<dbReference type="STRING" id="10090.ENSMUSP00000088254"/>
<dbReference type="GlyGen" id="Q80YT7">
    <property type="glycosylation" value="3 sites, 3 N-linked glycans (3 sites)"/>
</dbReference>
<dbReference type="iPTMnet" id="Q80YT7"/>
<dbReference type="PhosphoSitePlus" id="Q80YT7"/>
<dbReference type="PaxDb" id="10090-ENSMUSP00000040905"/>
<dbReference type="ProteomicsDB" id="287595">
    <molecule id="Q80YT7-1"/>
</dbReference>
<dbReference type="ProteomicsDB" id="287596">
    <molecule id="Q80YT7-2"/>
</dbReference>
<dbReference type="Pumba" id="Q80YT7"/>
<dbReference type="Antibodypedia" id="2152">
    <property type="antibodies" value="129 antibodies from 24 providers"/>
</dbReference>
<dbReference type="DNASU" id="83679"/>
<dbReference type="Ensembl" id="ENSMUST00000045243.15">
    <molecule id="Q80YT7-2"/>
    <property type="protein sequence ID" value="ENSMUSP00000040905.9"/>
    <property type="gene ID" value="ENSMUSG00000038170.16"/>
</dbReference>
<dbReference type="GeneID" id="83679"/>
<dbReference type="KEGG" id="mmu:83679"/>
<dbReference type="UCSC" id="uc008qpg.1">
    <molecule id="Q80YT7-2"/>
    <property type="organism name" value="mouse"/>
</dbReference>
<dbReference type="AGR" id="MGI:1891434"/>
<dbReference type="CTD" id="9659"/>
<dbReference type="MGI" id="MGI:1891434">
    <property type="gene designation" value="Pde4dip"/>
</dbReference>
<dbReference type="VEuPathDB" id="HostDB:ENSMUSG00000038170"/>
<dbReference type="eggNOG" id="ENOG502QPV2">
    <property type="taxonomic scope" value="Eukaryota"/>
</dbReference>
<dbReference type="GeneTree" id="ENSGT00950000183190"/>
<dbReference type="HOGENOM" id="CLU_302801_0_0_1"/>
<dbReference type="InParanoid" id="Q80YT7"/>
<dbReference type="OrthoDB" id="10255000at2759"/>
<dbReference type="PhylomeDB" id="Q80YT7"/>
<dbReference type="TreeFam" id="TF329233"/>
<dbReference type="BioGRID-ORCS" id="83679">
    <property type="hits" value="4 hits in 78 CRISPR screens"/>
</dbReference>
<dbReference type="ChiTaRS" id="Pde4dip">
    <property type="organism name" value="mouse"/>
</dbReference>
<dbReference type="PRO" id="PR:Q80YT7"/>
<dbReference type="Proteomes" id="UP000000589">
    <property type="component" value="Chromosome 3"/>
</dbReference>
<dbReference type="RNAct" id="Q80YT7">
    <property type="molecule type" value="protein"/>
</dbReference>
<dbReference type="Bgee" id="ENSMUSG00000038170">
    <property type="expression patterns" value="Expressed in hindlimb stylopod muscle and 245 other cell types or tissues"/>
</dbReference>
<dbReference type="ExpressionAtlas" id="Q80YT7">
    <property type="expression patterns" value="baseline and differential"/>
</dbReference>
<dbReference type="GO" id="GO:0005813">
    <property type="term" value="C:centrosome"/>
    <property type="evidence" value="ECO:0000250"/>
    <property type="project" value="UniProtKB"/>
</dbReference>
<dbReference type="GO" id="GO:0005737">
    <property type="term" value="C:cytoplasm"/>
    <property type="evidence" value="ECO:0000250"/>
    <property type="project" value="UniProtKB"/>
</dbReference>
<dbReference type="GO" id="GO:0005794">
    <property type="term" value="C:Golgi apparatus"/>
    <property type="evidence" value="ECO:0000250"/>
    <property type="project" value="UniProtKB"/>
</dbReference>
<dbReference type="GO" id="GO:0030016">
    <property type="term" value="C:myofibril"/>
    <property type="evidence" value="ECO:0000250"/>
    <property type="project" value="UniProtKB"/>
</dbReference>
<dbReference type="GO" id="GO:0005634">
    <property type="term" value="C:nucleus"/>
    <property type="evidence" value="ECO:0000250"/>
    <property type="project" value="UniProtKB"/>
</dbReference>
<dbReference type="GO" id="GO:0019899">
    <property type="term" value="F:enzyme binding"/>
    <property type="evidence" value="ECO:0000250"/>
    <property type="project" value="UniProtKB"/>
</dbReference>
<dbReference type="GO" id="GO:0060090">
    <property type="term" value="F:molecular adaptor activity"/>
    <property type="evidence" value="ECO:0000250"/>
    <property type="project" value="UniProtKB"/>
</dbReference>
<dbReference type="GO" id="GO:0065003">
    <property type="term" value="P:protein-containing complex assembly"/>
    <property type="evidence" value="ECO:0000250"/>
    <property type="project" value="UniProtKB"/>
</dbReference>
<dbReference type="GO" id="GO:1903358">
    <property type="term" value="P:regulation of Golgi organization"/>
    <property type="evidence" value="ECO:0000250"/>
    <property type="project" value="UniProtKB"/>
</dbReference>
<dbReference type="InterPro" id="IPR056273">
    <property type="entry name" value="CC_CDK5RAP2_MYOME"/>
</dbReference>
<dbReference type="InterPro" id="IPR012943">
    <property type="entry name" value="Cnn_1N"/>
</dbReference>
<dbReference type="InterPro" id="IPR052593">
    <property type="entry name" value="MT-associated_AKAP9-binding"/>
</dbReference>
<dbReference type="InterPro" id="IPR010630">
    <property type="entry name" value="Olduvai_dom"/>
</dbReference>
<dbReference type="PANTHER" id="PTHR46501">
    <property type="entry name" value="MYOMEGALIN"/>
    <property type="match status" value="1"/>
</dbReference>
<dbReference type="PANTHER" id="PTHR46501:SF2">
    <property type="entry name" value="MYOMEGALIN"/>
    <property type="match status" value="1"/>
</dbReference>
<dbReference type="Pfam" id="PF23246">
    <property type="entry name" value="CC_CDK5RAP2"/>
    <property type="match status" value="1"/>
</dbReference>
<dbReference type="Pfam" id="PF07989">
    <property type="entry name" value="Cnn_1N"/>
    <property type="match status" value="1"/>
</dbReference>
<dbReference type="SMART" id="SM01148">
    <property type="entry name" value="DUF1220"/>
    <property type="match status" value="1"/>
</dbReference>
<dbReference type="PROSITE" id="PS51316">
    <property type="entry name" value="ODV"/>
    <property type="match status" value="1"/>
</dbReference>
<evidence type="ECO:0000250" key="1">
    <source>
        <dbReference type="UniProtKB" id="Q5VU43"/>
    </source>
</evidence>
<evidence type="ECO:0000250" key="2">
    <source>
        <dbReference type="UniProtKB" id="Q9WUJ3"/>
    </source>
</evidence>
<evidence type="ECO:0000255" key="3"/>
<evidence type="ECO:0000255" key="4">
    <source>
        <dbReference type="PROSITE-ProRule" id="PRU00647"/>
    </source>
</evidence>
<evidence type="ECO:0000256" key="5">
    <source>
        <dbReference type="SAM" id="MobiDB-lite"/>
    </source>
</evidence>
<evidence type="ECO:0000303" key="6">
    <source>
    </source>
</evidence>
<evidence type="ECO:0000303" key="7">
    <source>
    </source>
</evidence>
<evidence type="ECO:0000305" key="8"/>
<sequence>MSNGYRTLSQHLNDLKKENFSLKLRIYFLEERMQQKYEVSREDVYKRNIELKVEVESLKRELQDRKQHLDKTWADAEDLNSQNEAELRRQVEERQQETEHVYELLGNKIQLLQEEPRLAKNEATEMETLVEAEKRCNLELSERWTNAAKNREDAAGDQEKPDQYSEALAQRDRRIEELRQSLAAQEGLVEQLSQEKRQLLHLLEEPASMEVQPVPKGLPTQQKPDLHETPTTQPPVSESHLAELQDKIQQTEATNKILQEKLNDLSCELKSAQESSQKQDTTIQSLKEMLKSRESETEELYQVIEGQNDTMAKLREMLHQSQLGQLHSSEGIAPAQQQVALLDLQSALFCSQLEIQRLQRLVRQKERQLADGKRCVQLVEAAAQEREHQKEAAWKHNQELRKALQHLQGELHSKSQQLHVLEAEKYNEIRTQGQNIQHLSHSLSHKEQLIQELQELLQYRDNADKTLDTNEVFLEKLRQRIQDRAVALERVIDEKFSALEEKDKELRQLRLAVRDRDHDLERLRCVLSANEATMQSMESLLRARGLEVEQLTATCQNLQWLKEELETKFGHWQKEQESIIQQLQTSLHDRNKEVEDLSATLLCKLGPGQSEVAEELCQRLQRKERMLQDLLSDRNKQAVEHEMEIQGLLQSMGTREQERQAAAEKMVQAFMERNSELQALRQYLGGKELMTSSQTFISNQPAGVTSIGPHHGEQTDQGSMQMPSRDDSTSLTAREEASIPRSTLGDSDTVAGLEKELSNAKEELELMAKKERESQMELSALQSMMAMQEEELQVQAADLESLTRNVQIKEDLIKDLQMQLVDPEDIPAMERLTQEVLLLREKVASVEPQGQEVSGNKRQQLLLMLEGLVDERSRLNEALQAERQLYSSLVKFHAQPENSERDGTLQVELEGAQVLRTRLEEVLGRSLERLSRLESLAAIGGGELESVQAQEMLHLRAEIHQHLEEKRKAEVELKELKAQIEEAGFSSVSHISRNTMLSLCLENAELKEQMGEAMSDGWEVEEDKEKGEVMLETVVAKGCLNENSLQAEFRKVQGKLKSAYNIINLLKEQLLLRSSEGNSKEMPELLVRLAREVDRMNTGLPSLGKHQHQEQENTTTARPGSRPQSLPLGAALSVDGYQLENKSQAQDSGHQPEFSLPGSTKHLRSQLAQCRQRYQDLQEKLLISEATVFAQANQLEKYRAVFSESLVKQDSKQIQVDLQDLGYETCGRSENEAEREETTSPECEEHNNLRPVVLMEGLCSEQGYLDPVLVSPPAKKPLENKPGKQEEFRAHGTPDDSSLLRKDIRDLKAQLQNANKVIQNLRSRVRSLSATSDYSSSLERPRKLRAVATLEGASPHSVTDEDEGWLSDGTGAFYPPGLQAKKDLESLIQRVSQLEAQLPKTGLEGKLAEELRCASWPGKYDSLIQDQARELSYLRQKIREGRGICYLLTQHAKDTVKSFEDLLRSNDIDYYLGQSFREQLAQGGQLTERLTSKLSTKDHKSEKEEAGLEPLALRLSRELQEKEKVIEVLQAKLDTRSLSPPSSHAVSDSHRSASTTSFLSDDIEACSDMDVASEYTHYDEKKPSPSHSAASASQGLKGESSSSPISLPTPQNPPKEASQAHPGFHFHSIPKPASLSQTPMHSALPSFVPFSPSGPPLLGCCETPMVSLAEAQQELQMLQKQLGESVSIAPPASTSTLLSNQTEASSPHYINPAQPHTPTRSTIELGRILEPGYLGSSGQWDMMRPQKGSVSGELSSGSSMYQLNSKPTGADLLEEHLGEIRNLRQRLEESICVNDRLREQLQHRLSSTARENGSTSHFYSQGLESMPQLYNENRALREENQSLQTRLSHASRGHSQEVDHLREALLSSRSQLQELEKELEQQKAERQQLSLQSELQIYESLCENPKKALKAFSLDSCHQVPGELSCLVAEIRALRGQLEQSIEVNNRLRLQLEQQMDRGAGKASLGPIAVGQSFPDKAEPANLHQGSAASPPVRDVGLNSPAMVLPNSSCSAPGSDHAIVTRTNNELSSDDSAAMKNPPKLEVDATDGPFANKHGRHVIGHVDDYDALQQQIGEGKLLIQKILSLMRSARSIPGQEAQDTEAPGNISAHELRSSAKALNHALEESTSLLNMFWRAALPNTHGPVLVGKEGQLMEKELLDLRAQVSQQEQILQNTAARLKRANQRKKSMEQFIVSHLTRTHDVLKKARTNLEMKSFRALTCTPAL</sequence>
<gene>
    <name type="primary">Pde4dip</name>
    <name type="synonym">Kiaa0454</name>
</gene>
<keyword id="KW-0025">Alternative splicing</keyword>
<keyword id="KW-0175">Coiled coil</keyword>
<keyword id="KW-0963">Cytoplasm</keyword>
<keyword id="KW-0206">Cytoskeleton</keyword>
<keyword id="KW-0333">Golgi apparatus</keyword>
<keyword id="KW-0597">Phosphoprotein</keyword>
<keyword id="KW-1185">Reference proteome</keyword>
<proteinExistence type="evidence at protein level"/>
<name>MYOME_MOUSE</name>
<feature type="chain" id="PRO_0000307691" description="Myomegalin">
    <location>
        <begin position="1"/>
        <end position="2224"/>
    </location>
</feature>
<feature type="domain" description="Olduvai" evidence="4">
    <location>
        <begin position="1497"/>
        <end position="1588"/>
    </location>
</feature>
<feature type="region of interest" description="Disordered" evidence="5">
    <location>
        <begin position="206"/>
        <end position="236"/>
    </location>
</feature>
<feature type="region of interest" description="Disordered" evidence="5">
    <location>
        <begin position="703"/>
        <end position="751"/>
    </location>
</feature>
<feature type="region of interest" description="Disordered" evidence="5">
    <location>
        <begin position="1098"/>
        <end position="1128"/>
    </location>
</feature>
<feature type="region of interest" description="Disordered" evidence="5">
    <location>
        <begin position="1141"/>
        <end position="1161"/>
    </location>
</feature>
<feature type="region of interest" description="Disordered" evidence="5">
    <location>
        <begin position="1270"/>
        <end position="1298"/>
    </location>
</feature>
<feature type="region of interest" description="Disordered" evidence="5">
    <location>
        <begin position="1576"/>
        <end position="1637"/>
    </location>
</feature>
<feature type="region of interest" description="Disordered" evidence="5">
    <location>
        <begin position="1736"/>
        <end position="1757"/>
    </location>
</feature>
<feature type="region of interest" description="Disordered" evidence="5">
    <location>
        <begin position="1805"/>
        <end position="1824"/>
    </location>
</feature>
<feature type="region of interest" description="Disordered" evidence="5">
    <location>
        <begin position="1962"/>
        <end position="2001"/>
    </location>
</feature>
<feature type="coiled-coil region" evidence="3">
    <location>
        <begin position="41"/>
        <end position="97"/>
    </location>
</feature>
<feature type="coiled-coil region" evidence="3">
    <location>
        <begin position="162"/>
        <end position="205"/>
    </location>
</feature>
<feature type="coiled-coil region" evidence="3">
    <location>
        <begin position="236"/>
        <end position="318"/>
    </location>
</feature>
<feature type="coiled-coil region" evidence="3">
    <location>
        <begin position="350"/>
        <end position="682"/>
    </location>
</feature>
<feature type="coiled-coil region" evidence="3">
    <location>
        <begin position="745"/>
        <end position="822"/>
    </location>
</feature>
<feature type="coiled-coil region" evidence="3">
    <location>
        <begin position="856"/>
        <end position="886"/>
    </location>
</feature>
<feature type="coiled-coil region" evidence="3">
    <location>
        <begin position="949"/>
        <end position="986"/>
    </location>
</feature>
<feature type="coiled-coil region" evidence="3">
    <location>
        <begin position="1159"/>
        <end position="1187"/>
    </location>
</feature>
<feature type="coiled-coil region" evidence="3">
    <location>
        <begin position="1295"/>
        <end position="1331"/>
    </location>
</feature>
<feature type="coiled-coil region" evidence="3">
    <location>
        <begin position="1377"/>
        <end position="1401"/>
    </location>
</feature>
<feature type="coiled-coil region" evidence="3">
    <location>
        <begin position="1769"/>
        <end position="1958"/>
    </location>
</feature>
<feature type="coiled-coil region" evidence="3">
    <location>
        <begin position="2148"/>
        <end position="2191"/>
    </location>
</feature>
<feature type="compositionally biased region" description="Polar residues" evidence="5">
    <location>
        <begin position="219"/>
        <end position="236"/>
    </location>
</feature>
<feature type="compositionally biased region" description="Basic and acidic residues" evidence="5">
    <location>
        <begin position="724"/>
        <end position="738"/>
    </location>
</feature>
<feature type="compositionally biased region" description="Polar residues" evidence="5">
    <location>
        <begin position="1112"/>
        <end position="1124"/>
    </location>
</feature>
<feature type="compositionally biased region" description="Basic and acidic residues" evidence="5">
    <location>
        <begin position="1276"/>
        <end position="1298"/>
    </location>
</feature>
<feature type="compositionally biased region" description="Polar residues" evidence="5">
    <location>
        <begin position="1599"/>
        <end position="1609"/>
    </location>
</feature>
<feature type="compositionally biased region" description="Low complexity" evidence="5">
    <location>
        <begin position="1748"/>
        <end position="1757"/>
    </location>
</feature>
<feature type="modified residue" description="Phosphothreonine" evidence="1">
    <location>
        <position position="705"/>
    </location>
</feature>
<feature type="splice variant" id="VSP_028784" description="In isoform 2." evidence="6 7">
    <original>MSNGYRTLSQHLNDLKKENFSLKLRIYFLEERMQQKYEVSREDVYKRNIELKVEVESLKRELQDRKQHLDKTWADAEDLNSQNEAELRRQVEERQQETEHVYELLGNKIQLLQEEPRLAKNEATEMETLVEAEKRCNLELSERWTNAAKNREDAAGDQEKPDQYSEALAQRDRRIEELRQSLAAQEGLVEQLSQEKRQLLHLLEEPASMEV</original>
    <variation>MKEICRICARELCGNQRRWIFHTASKLNLQVLLSHVLGKDVSRDGKAEFACSKCAFMLDRIYRFDTVIARIEALSLERLQKLLLEKDRLKFCIASMYRKNNDDSGEENKAGSGTVDISGLPDMRYAALLQEDFAYSGFECWVENEDQINDSHSCHASEGPGNRPRRCRGCAALRVADSDYEAICKVPRKVARSISYAPSSRWSTSICTEEPALSEVGPPDLASTKVPPDGESMEEGTPGSSVESLDASVQASPPQQKDEETERSAKELVKCDYCSDEQAPQHLCNHKLELALSMIKGLDYKPIQSPRGSKLPIPVKSILPGAKPGHILTNGVSSSFLNRPLKPLYRTPVSYPWEISDGQELWDDLCDEYLPIGF</variation>
    <location>
        <begin position="1"/>
        <end position="211"/>
    </location>
</feature>
<feature type="splice variant" id="VSP_028785" description="In isoform 2." evidence="6 7">
    <original>QEMLHL</original>
    <variation>RHKHAF</variation>
    <location>
        <begin position="950"/>
        <end position="955"/>
    </location>
</feature>
<feature type="splice variant" id="VSP_028786" description="In isoform 2." evidence="6 7">
    <location>
        <begin position="956"/>
        <end position="2224"/>
    </location>
</feature>
<feature type="sequence conflict" description="In Ref. 3; AAI41173." evidence="8" ref="3">
    <original>T</original>
    <variation>A</variation>
    <location>
        <position position="695"/>
    </location>
</feature>
<feature type="sequence conflict" description="In Ref. 3; AAI41173." evidence="8" ref="3">
    <original>M</original>
    <variation>V</variation>
    <location>
        <position position="787"/>
    </location>
</feature>
<feature type="sequence conflict" description="In Ref. 3; AAI41173." evidence="8" ref="3">
    <original>G</original>
    <variation>R</variation>
    <location>
        <position position="903"/>
    </location>
</feature>
<protein>
    <recommendedName>
        <fullName>Myomegalin</fullName>
    </recommendedName>
    <alternativeName>
        <fullName>Phosphodiesterase 4D-interacting protein</fullName>
    </alternativeName>
</protein>
<reference key="1">
    <citation type="journal article" date="2003" name="DNA Res.">
        <title>Prediction of the coding sequences of mouse homologues of KIAA gene: II. The complete nucleotide sequences of 400 mouse KIAA-homologous cDNAs identified by screening of terminal sequences of cDNA clones randomly sampled from size-fractionated libraries.</title>
        <authorList>
            <person name="Okazaki N."/>
            <person name="Kikuno R."/>
            <person name="Ohara R."/>
            <person name="Inamoto S."/>
            <person name="Aizawa H."/>
            <person name="Yuasa S."/>
            <person name="Nakajima D."/>
            <person name="Nagase T."/>
            <person name="Ohara O."/>
            <person name="Koga H."/>
        </authorList>
    </citation>
    <scope>NUCLEOTIDE SEQUENCE [LARGE SCALE MRNA] (ISOFORM 2)</scope>
    <source>
        <tissue>Brain</tissue>
    </source>
</reference>
<reference key="2">
    <citation type="journal article" date="2009" name="PLoS Biol.">
        <title>Lineage-specific biology revealed by a finished genome assembly of the mouse.</title>
        <authorList>
            <person name="Church D.M."/>
            <person name="Goodstadt L."/>
            <person name="Hillier L.W."/>
            <person name="Zody M.C."/>
            <person name="Goldstein S."/>
            <person name="She X."/>
            <person name="Bult C.J."/>
            <person name="Agarwala R."/>
            <person name="Cherry J.L."/>
            <person name="DiCuccio M."/>
            <person name="Hlavina W."/>
            <person name="Kapustin Y."/>
            <person name="Meric P."/>
            <person name="Maglott D."/>
            <person name="Birtle Z."/>
            <person name="Marques A.C."/>
            <person name="Graves T."/>
            <person name="Zhou S."/>
            <person name="Teague B."/>
            <person name="Potamousis K."/>
            <person name="Churas C."/>
            <person name="Place M."/>
            <person name="Herschleb J."/>
            <person name="Runnheim R."/>
            <person name="Forrest D."/>
            <person name="Amos-Landgraf J."/>
            <person name="Schwartz D.C."/>
            <person name="Cheng Z."/>
            <person name="Lindblad-Toh K."/>
            <person name="Eichler E.E."/>
            <person name="Ponting C.P."/>
        </authorList>
    </citation>
    <scope>NUCLEOTIDE SEQUENCE [LARGE SCALE GENOMIC DNA]</scope>
    <source>
        <strain>C57BL/6J</strain>
    </source>
</reference>
<reference key="3">
    <citation type="journal article" date="2004" name="Genome Res.">
        <title>The status, quality, and expansion of the NIH full-length cDNA project: the Mammalian Gene Collection (MGC).</title>
        <authorList>
            <consortium name="The MGC Project Team"/>
        </authorList>
    </citation>
    <scope>NUCLEOTIDE SEQUENCE [LARGE SCALE MRNA] (ISOFORM 2)</scope>
    <source>
        <strain>FVB/N</strain>
        <tissue>Brain</tissue>
        <tissue>Mammary tumor</tissue>
    </source>
</reference>
<reference key="4">
    <citation type="journal article" date="2010" name="Cell">
        <title>A tissue-specific atlas of mouse protein phosphorylation and expression.</title>
        <authorList>
            <person name="Huttlin E.L."/>
            <person name="Jedrychowski M.P."/>
            <person name="Elias J.E."/>
            <person name="Goswami T."/>
            <person name="Rad R."/>
            <person name="Beausoleil S.A."/>
            <person name="Villen J."/>
            <person name="Haas W."/>
            <person name="Sowa M.E."/>
            <person name="Gygi S.P."/>
        </authorList>
    </citation>
    <scope>IDENTIFICATION BY MASS SPECTROMETRY [LARGE SCALE ANALYSIS]</scope>
    <source>
        <tissue>Lung</tissue>
        <tissue>Pancreas</tissue>
    </source>
</reference>
<accession>Q80YT7</accession>
<accession>C4IXU1</accession>
<accession>Q05CH5</accession>
<accession>Q80U00</accession>
<accession>Q8K240</accession>
<comment type="function">
    <text evidence="2">Functions as an anchor sequestering components of the cAMP-dependent pathway to Golgi and/or centrosomes (By similarity).</text>
</comment>
<comment type="function">
    <molecule>Isoform 2</molecule>
    <text evidence="1">Participates in microtubule dynamics, promoting microtubule assembly. Depending upon the cell context, may act at the level of the Golgi apparatus or that of the centrosome. In complex with AKAP9, recruits CAMSAP2 to the Golgi apparatus and tethers non-centrosomal minus-end microtubules to the Golgi, an important step for polarized cell movement. In complex with AKAP9, EB1/MAPRE1 and CDK5RAP2, contributes to microtubules nucleation and extension from the centrosome to the cell periphery, a crucial process for directed cell migration, mitotic spindle orientation and cell-cycle progression.</text>
</comment>
<comment type="subunit">
    <text evidence="1 2">Interacts with PDE4D (By similarity). Isoform 2 interacts with MAPRE1 and MAPRE3. Isoform 2 forms a pericentrosomal complex with AKAP9, CDK5RAP2 and EB1/MAPRE1; within this complex, may mediate MAPRE1-binding to CDK5RAP2. Interaction with AKAP9 stabilizes both proteins. Isoform 2 interacts (via N-terminus) with CAMSAP2; this interaction is much stronger in the presence of AKAP9. In complex with AKAP9, Isoform 2 recruits CAMSAP2 to the Golgi apparatus. Isoform 2 interacts with unglycosylated LGALS3BP; this interaction may connect the pericentrosomal complex to the gamma-tubulin ring complex (gamma-TuRC) to promote microtubule assembly and acetylation (By similarity).</text>
</comment>
<comment type="subcellular location">
    <molecule>Isoform 2</molecule>
    <subcellularLocation>
        <location evidence="1">Cytoplasm</location>
        <location evidence="1">Cytoskeleton</location>
        <location evidence="1">Microtubule organizing center</location>
        <location evidence="1">Centrosome</location>
    </subcellularLocation>
    <subcellularLocation>
        <location evidence="1">Cytoplasm</location>
        <location evidence="1">Cytoskeleton</location>
    </subcellularLocation>
    <subcellularLocation>
        <location evidence="1">Golgi apparatus</location>
    </subcellularLocation>
    <text evidence="1">Associated with the microtubule network at the growing distal tip of microtubules. Targeting to the Golgi apparatus requires AKAP9.</text>
</comment>
<comment type="alternative products">
    <event type="alternative splicing"/>
    <isoform>
        <id>Q80YT7-1</id>
        <name>1</name>
        <sequence type="displayed"/>
    </isoform>
    <isoform>
        <id>Q80YT7-2</id>
        <name>2</name>
        <name>Myomegalin variant 8</name>
        <name>MMG</name>
        <name>MMG8</name>
        <name>Short myomegalin-like EB1 binding protein</name>
        <name>SMYLE</name>
        <sequence type="described" ref="VSP_028784 VSP_028785 VSP_028786"/>
    </isoform>
</comment>
<comment type="domain">
    <molecule>Isoform 2</molecule>
    <text evidence="1">Residues 1-150 are involved in AKAP9-binding.</text>
</comment>
<comment type="sequence caution" evidence="8">
    <conflict type="miscellaneous discrepancy">
        <sequence resource="EMBL-CDS" id="AAH25653"/>
    </conflict>
    <text>Contaminating sequence. Potential poly-A sequence.</text>
</comment>
<comment type="sequence caution" evidence="8">
    <conflict type="erroneous initiation">
        <sequence resource="EMBL-CDS" id="BAC65568"/>
    </conflict>
    <text>Extended N-terminus.</text>
</comment>